<keyword id="KW-0012">Acyltransferase</keyword>
<keyword id="KW-0963">Cytoplasm</keyword>
<keyword id="KW-0808">Transferase</keyword>
<name>THLA_STAAM</name>
<feature type="chain" id="PRO_0000270504" description="Probable acetyl-CoA acyltransferase">
    <location>
        <begin position="1"/>
        <end position="393"/>
    </location>
</feature>
<feature type="active site" description="Acyl-thioester intermediate" evidence="1">
    <location>
        <position position="88"/>
    </location>
</feature>
<feature type="active site" description="Proton acceptor" evidence="2">
    <location>
        <position position="349"/>
    </location>
</feature>
<feature type="active site" description="Proton acceptor" evidence="2">
    <location>
        <position position="378"/>
    </location>
</feature>
<dbReference type="EC" id="2.3.1.9"/>
<dbReference type="EMBL" id="BA000017">
    <property type="protein sequence ID" value="BAB56516.1"/>
    <property type="molecule type" value="Genomic_DNA"/>
</dbReference>
<dbReference type="RefSeq" id="WP_000199066.1">
    <property type="nucleotide sequence ID" value="NC_002758.2"/>
</dbReference>
<dbReference type="SMR" id="Q99WM3"/>
<dbReference type="KEGG" id="sav:SAV0354"/>
<dbReference type="HOGENOM" id="CLU_031026_0_0_9"/>
<dbReference type="PhylomeDB" id="Q99WM3"/>
<dbReference type="Proteomes" id="UP000002481">
    <property type="component" value="Chromosome"/>
</dbReference>
<dbReference type="GO" id="GO:0005737">
    <property type="term" value="C:cytoplasm"/>
    <property type="evidence" value="ECO:0007669"/>
    <property type="project" value="UniProtKB-SubCell"/>
</dbReference>
<dbReference type="GO" id="GO:0003985">
    <property type="term" value="F:acetyl-CoA C-acetyltransferase activity"/>
    <property type="evidence" value="ECO:0007669"/>
    <property type="project" value="UniProtKB-EC"/>
</dbReference>
<dbReference type="CDD" id="cd00751">
    <property type="entry name" value="thiolase"/>
    <property type="match status" value="1"/>
</dbReference>
<dbReference type="FunFam" id="3.40.47.10:FF:000010">
    <property type="entry name" value="Acetyl-CoA acetyltransferase (Thiolase)"/>
    <property type="match status" value="1"/>
</dbReference>
<dbReference type="Gene3D" id="3.40.47.10">
    <property type="match status" value="2"/>
</dbReference>
<dbReference type="InterPro" id="IPR002155">
    <property type="entry name" value="Thiolase"/>
</dbReference>
<dbReference type="InterPro" id="IPR016039">
    <property type="entry name" value="Thiolase-like"/>
</dbReference>
<dbReference type="InterPro" id="IPR020615">
    <property type="entry name" value="Thiolase_acyl_enz_int_AS"/>
</dbReference>
<dbReference type="InterPro" id="IPR020610">
    <property type="entry name" value="Thiolase_AS"/>
</dbReference>
<dbReference type="InterPro" id="IPR020617">
    <property type="entry name" value="Thiolase_C"/>
</dbReference>
<dbReference type="InterPro" id="IPR020613">
    <property type="entry name" value="Thiolase_CS"/>
</dbReference>
<dbReference type="InterPro" id="IPR020616">
    <property type="entry name" value="Thiolase_N"/>
</dbReference>
<dbReference type="NCBIfam" id="TIGR01930">
    <property type="entry name" value="AcCoA-C-Actrans"/>
    <property type="match status" value="1"/>
</dbReference>
<dbReference type="PANTHER" id="PTHR18919:SF107">
    <property type="entry name" value="ACETYL-COA ACETYLTRANSFERASE, CYTOSOLIC"/>
    <property type="match status" value="1"/>
</dbReference>
<dbReference type="PANTHER" id="PTHR18919">
    <property type="entry name" value="ACETYL-COA C-ACYLTRANSFERASE"/>
    <property type="match status" value="1"/>
</dbReference>
<dbReference type="Pfam" id="PF02803">
    <property type="entry name" value="Thiolase_C"/>
    <property type="match status" value="1"/>
</dbReference>
<dbReference type="Pfam" id="PF00108">
    <property type="entry name" value="Thiolase_N"/>
    <property type="match status" value="1"/>
</dbReference>
<dbReference type="PIRSF" id="PIRSF000429">
    <property type="entry name" value="Ac-CoA_Ac_transf"/>
    <property type="match status" value="1"/>
</dbReference>
<dbReference type="SUPFAM" id="SSF53901">
    <property type="entry name" value="Thiolase-like"/>
    <property type="match status" value="2"/>
</dbReference>
<dbReference type="PROSITE" id="PS00098">
    <property type="entry name" value="THIOLASE_1"/>
    <property type="match status" value="1"/>
</dbReference>
<dbReference type="PROSITE" id="PS00737">
    <property type="entry name" value="THIOLASE_2"/>
    <property type="match status" value="1"/>
</dbReference>
<dbReference type="PROSITE" id="PS00099">
    <property type="entry name" value="THIOLASE_3"/>
    <property type="match status" value="1"/>
</dbReference>
<sequence>MTRVVLAAAYRTPIGVFGGAFKDVPAYDLGATLIEHIIKETGLNPSEIDEVIIGNVLQAGQGQNPARIAAMKGGLPETVPAFTVNKVCGSGLKSIQLAYQSIVTGENDIVLAGGMENMSQSPMLVNNSRFGFKMGHQSMVDSMVYDGLTDVFNQYHMGITAENLVEQYGISREEQDTFAVNSQHKAVRAQQNGEFDSEIVPVSIPQRKGEPILVTKDEGVRENVSVEKLSRLRPAFKKDGTVTAGNASGINDGAAMMLVMSEDKAKELNIEPLAVLDGFGSHGVDPSIMGIAPVGAVEKALKRSKKELSDIDVFELNEAFAAQLLAVDRELKLPPEKVNVKGGAIALGHPIGASGARVLVTLLHQLNDEVETGLTSLCIGGGQAIAAVVSKYK</sequence>
<comment type="catalytic activity">
    <reaction evidence="2">
        <text>2 acetyl-CoA = acetoacetyl-CoA + CoA</text>
        <dbReference type="Rhea" id="RHEA:21036"/>
        <dbReference type="ChEBI" id="CHEBI:57286"/>
        <dbReference type="ChEBI" id="CHEBI:57287"/>
        <dbReference type="ChEBI" id="CHEBI:57288"/>
        <dbReference type="EC" id="2.3.1.9"/>
    </reaction>
</comment>
<comment type="subcellular location">
    <subcellularLocation>
        <location evidence="1">Cytoplasm</location>
    </subcellularLocation>
</comment>
<comment type="similarity">
    <text evidence="3">Belongs to the thiolase-like superfamily. Thiolase family.</text>
</comment>
<organism>
    <name type="scientific">Staphylococcus aureus (strain Mu50 / ATCC 700699)</name>
    <dbReference type="NCBI Taxonomy" id="158878"/>
    <lineage>
        <taxon>Bacteria</taxon>
        <taxon>Bacillati</taxon>
        <taxon>Bacillota</taxon>
        <taxon>Bacilli</taxon>
        <taxon>Bacillales</taxon>
        <taxon>Staphylococcaceae</taxon>
        <taxon>Staphylococcus</taxon>
    </lineage>
</organism>
<gene>
    <name type="ordered locus">SAV0354</name>
</gene>
<protein>
    <recommendedName>
        <fullName>Probable acetyl-CoA acyltransferase</fullName>
        <ecNumber>2.3.1.9</ecNumber>
    </recommendedName>
    <alternativeName>
        <fullName>Acetoacetyl-CoA thiolase</fullName>
    </alternativeName>
</protein>
<accession>Q99WM3</accession>
<evidence type="ECO:0000250" key="1"/>
<evidence type="ECO:0000255" key="2">
    <source>
        <dbReference type="PROSITE-ProRule" id="PRU10020"/>
    </source>
</evidence>
<evidence type="ECO:0000305" key="3"/>
<reference key="1">
    <citation type="journal article" date="2001" name="Lancet">
        <title>Whole genome sequencing of meticillin-resistant Staphylococcus aureus.</title>
        <authorList>
            <person name="Kuroda M."/>
            <person name="Ohta T."/>
            <person name="Uchiyama I."/>
            <person name="Baba T."/>
            <person name="Yuzawa H."/>
            <person name="Kobayashi I."/>
            <person name="Cui L."/>
            <person name="Oguchi A."/>
            <person name="Aoki K."/>
            <person name="Nagai Y."/>
            <person name="Lian J.-Q."/>
            <person name="Ito T."/>
            <person name="Kanamori M."/>
            <person name="Matsumaru H."/>
            <person name="Maruyama A."/>
            <person name="Murakami H."/>
            <person name="Hosoyama A."/>
            <person name="Mizutani-Ui Y."/>
            <person name="Takahashi N.K."/>
            <person name="Sawano T."/>
            <person name="Inoue R."/>
            <person name="Kaito C."/>
            <person name="Sekimizu K."/>
            <person name="Hirakawa H."/>
            <person name="Kuhara S."/>
            <person name="Goto S."/>
            <person name="Yabuzaki J."/>
            <person name="Kanehisa M."/>
            <person name="Yamashita A."/>
            <person name="Oshima K."/>
            <person name="Furuya K."/>
            <person name="Yoshino C."/>
            <person name="Shiba T."/>
            <person name="Hattori M."/>
            <person name="Ogasawara N."/>
            <person name="Hayashi H."/>
            <person name="Hiramatsu K."/>
        </authorList>
    </citation>
    <scope>NUCLEOTIDE SEQUENCE [LARGE SCALE GENOMIC DNA]</scope>
    <source>
        <strain>Mu50 / ATCC 700699</strain>
    </source>
</reference>
<proteinExistence type="inferred from homology"/>